<gene>
    <name evidence="1" type="primary">yciB</name>
    <name type="ordered locus">YPTB2119</name>
</gene>
<feature type="chain" id="PRO_1000021078" description="Inner membrane-spanning protein YciB">
    <location>
        <begin position="1"/>
        <end position="180"/>
    </location>
</feature>
<feature type="transmembrane region" description="Helical" evidence="1">
    <location>
        <begin position="22"/>
        <end position="42"/>
    </location>
</feature>
<feature type="transmembrane region" description="Helical" evidence="1">
    <location>
        <begin position="50"/>
        <end position="70"/>
    </location>
</feature>
<feature type="transmembrane region" description="Helical" evidence="1">
    <location>
        <begin position="72"/>
        <end position="92"/>
    </location>
</feature>
<feature type="transmembrane region" description="Helical" evidence="1">
    <location>
        <begin position="121"/>
        <end position="141"/>
    </location>
</feature>
<feature type="transmembrane region" description="Helical" evidence="1">
    <location>
        <begin position="149"/>
        <end position="169"/>
    </location>
</feature>
<dbReference type="EMBL" id="BX936398">
    <property type="protein sequence ID" value="CAH21357.1"/>
    <property type="molecule type" value="Genomic_DNA"/>
</dbReference>
<dbReference type="RefSeq" id="WP_002210640.1">
    <property type="nucleotide sequence ID" value="NZ_CP009712.1"/>
</dbReference>
<dbReference type="KEGG" id="ypo:BZ17_342"/>
<dbReference type="KEGG" id="yps:YPTB2119"/>
<dbReference type="PATRIC" id="fig|273123.14.peg.364"/>
<dbReference type="Proteomes" id="UP000001011">
    <property type="component" value="Chromosome"/>
</dbReference>
<dbReference type="GO" id="GO:0005886">
    <property type="term" value="C:plasma membrane"/>
    <property type="evidence" value="ECO:0007669"/>
    <property type="project" value="UniProtKB-SubCell"/>
</dbReference>
<dbReference type="HAMAP" id="MF_00189">
    <property type="entry name" value="YciB"/>
    <property type="match status" value="1"/>
</dbReference>
<dbReference type="InterPro" id="IPR006008">
    <property type="entry name" value="YciB"/>
</dbReference>
<dbReference type="NCBIfam" id="TIGR00997">
    <property type="entry name" value="ispZ"/>
    <property type="match status" value="1"/>
</dbReference>
<dbReference type="NCBIfam" id="NF001324">
    <property type="entry name" value="PRK00259.1-2"/>
    <property type="match status" value="1"/>
</dbReference>
<dbReference type="NCBIfam" id="NF001325">
    <property type="entry name" value="PRK00259.1-3"/>
    <property type="match status" value="1"/>
</dbReference>
<dbReference type="NCBIfam" id="NF001326">
    <property type="entry name" value="PRK00259.1-4"/>
    <property type="match status" value="1"/>
</dbReference>
<dbReference type="PANTHER" id="PTHR36917:SF1">
    <property type="entry name" value="INNER MEMBRANE-SPANNING PROTEIN YCIB"/>
    <property type="match status" value="1"/>
</dbReference>
<dbReference type="PANTHER" id="PTHR36917">
    <property type="entry name" value="INTRACELLULAR SEPTATION PROTEIN A-RELATED"/>
    <property type="match status" value="1"/>
</dbReference>
<dbReference type="Pfam" id="PF04279">
    <property type="entry name" value="IspA"/>
    <property type="match status" value="1"/>
</dbReference>
<organism>
    <name type="scientific">Yersinia pseudotuberculosis serotype I (strain IP32953)</name>
    <dbReference type="NCBI Taxonomy" id="273123"/>
    <lineage>
        <taxon>Bacteria</taxon>
        <taxon>Pseudomonadati</taxon>
        <taxon>Pseudomonadota</taxon>
        <taxon>Gammaproteobacteria</taxon>
        <taxon>Enterobacterales</taxon>
        <taxon>Yersiniaceae</taxon>
        <taxon>Yersinia</taxon>
    </lineage>
</organism>
<keyword id="KW-0997">Cell inner membrane</keyword>
<keyword id="KW-1003">Cell membrane</keyword>
<keyword id="KW-0472">Membrane</keyword>
<keyword id="KW-0812">Transmembrane</keyword>
<keyword id="KW-1133">Transmembrane helix</keyword>
<evidence type="ECO:0000255" key="1">
    <source>
        <dbReference type="HAMAP-Rule" id="MF_00189"/>
    </source>
</evidence>
<proteinExistence type="inferred from homology"/>
<accession>Q66AL1</accession>
<name>YCIB_YERPS</name>
<reference key="1">
    <citation type="journal article" date="2004" name="Proc. Natl. Acad. Sci. U.S.A.">
        <title>Insights into the evolution of Yersinia pestis through whole-genome comparison with Yersinia pseudotuberculosis.</title>
        <authorList>
            <person name="Chain P.S.G."/>
            <person name="Carniel E."/>
            <person name="Larimer F.W."/>
            <person name="Lamerdin J."/>
            <person name="Stoutland P.O."/>
            <person name="Regala W.M."/>
            <person name="Georgescu A.M."/>
            <person name="Vergez L.M."/>
            <person name="Land M.L."/>
            <person name="Motin V.L."/>
            <person name="Brubaker R.R."/>
            <person name="Fowler J."/>
            <person name="Hinnebusch J."/>
            <person name="Marceau M."/>
            <person name="Medigue C."/>
            <person name="Simonet M."/>
            <person name="Chenal-Francisque V."/>
            <person name="Souza B."/>
            <person name="Dacheux D."/>
            <person name="Elliott J.M."/>
            <person name="Derbise A."/>
            <person name="Hauser L.J."/>
            <person name="Garcia E."/>
        </authorList>
    </citation>
    <scope>NUCLEOTIDE SEQUENCE [LARGE SCALE GENOMIC DNA]</scope>
    <source>
        <strain>IP32953</strain>
    </source>
</reference>
<comment type="function">
    <text evidence="1">Plays a role in cell envelope biogenesis, maintenance of cell envelope integrity and membrane homeostasis.</text>
</comment>
<comment type="subcellular location">
    <subcellularLocation>
        <location evidence="1">Cell inner membrane</location>
        <topology evidence="1">Multi-pass membrane protein</topology>
    </subcellularLocation>
</comment>
<comment type="similarity">
    <text evidence="1">Belongs to the YciB family.</text>
</comment>
<protein>
    <recommendedName>
        <fullName evidence="1">Inner membrane-spanning protein YciB</fullName>
    </recommendedName>
</protein>
<sequence length="180" mass="20875">MKQLLDFLPLVVFFIFYKMYDIFVASGALIVATLVALAFTWLKYRKVEKMTLVTAAMVLVFGTLTLAFHSDLFIKWKVTVLYVLFALALLVSQWVMKKPLIQRMLGKELTLPDKVWSTLNLSWAIFFLVCGLLNIYVAFWLPQDIWVNFKVFGLTALTLIFTLISGVYIYRHMPEEQKKS</sequence>